<sequence length="262" mass="28080">MIDKSAFVHPTAIVEEGASIGANAHIGPFCIVGPHVEIGEGTVLKSHVVVNGHTKIGRDNEIYQFASIGEVNQDLKYAGEPTRVEIGDRNRIRESVTIHRGTVQGGGLTKVGSDNLLMINAHIAHDCTVGNRCILANNATLAGHVSVDDFAIIGGMTAVHQFCIIGAHVMVGGCSGVAQDVPPYVIAQGNHATPFGVNIEGLKRRGFSREAITAIRNAYKLIYRSGKTLDEVKPEIAELAETYPEVKAFTDFFARSTRGLIR</sequence>
<name>LPXA_ECO7I</name>
<feature type="chain" id="PRO_1000122702" description="Acyl-[acyl-carrier-protein]--UDP-N-acetylglucosamine O-acyltransferase">
    <location>
        <begin position="1"/>
        <end position="262"/>
    </location>
</feature>
<dbReference type="EC" id="2.3.1.129" evidence="1"/>
<dbReference type="EMBL" id="CU928164">
    <property type="protein sequence ID" value="CAR16324.1"/>
    <property type="molecule type" value="Genomic_DNA"/>
</dbReference>
<dbReference type="RefSeq" id="WP_000565966.1">
    <property type="nucleotide sequence ID" value="NC_011750.1"/>
</dbReference>
<dbReference type="RefSeq" id="YP_002406230.1">
    <property type="nucleotide sequence ID" value="NC_011750.1"/>
</dbReference>
<dbReference type="SMR" id="B7NIE3"/>
<dbReference type="STRING" id="585057.ECIAI39_0184"/>
<dbReference type="GeneID" id="93777244"/>
<dbReference type="KEGG" id="ect:ECIAI39_0184"/>
<dbReference type="PATRIC" id="fig|585057.6.peg.197"/>
<dbReference type="HOGENOM" id="CLU_061249_0_0_6"/>
<dbReference type="UniPathway" id="UPA00359">
    <property type="reaction ID" value="UER00477"/>
</dbReference>
<dbReference type="Proteomes" id="UP000000749">
    <property type="component" value="Chromosome"/>
</dbReference>
<dbReference type="GO" id="GO:0005737">
    <property type="term" value="C:cytoplasm"/>
    <property type="evidence" value="ECO:0007669"/>
    <property type="project" value="UniProtKB-SubCell"/>
</dbReference>
<dbReference type="GO" id="GO:0016020">
    <property type="term" value="C:membrane"/>
    <property type="evidence" value="ECO:0007669"/>
    <property type="project" value="GOC"/>
</dbReference>
<dbReference type="GO" id="GO:0008780">
    <property type="term" value="F:acyl-[acyl-carrier-protein]-UDP-N-acetylglucosamine O-acyltransferase activity"/>
    <property type="evidence" value="ECO:0007669"/>
    <property type="project" value="UniProtKB-UniRule"/>
</dbReference>
<dbReference type="GO" id="GO:0009245">
    <property type="term" value="P:lipid A biosynthetic process"/>
    <property type="evidence" value="ECO:0007669"/>
    <property type="project" value="UniProtKB-UniRule"/>
</dbReference>
<dbReference type="CDD" id="cd03351">
    <property type="entry name" value="LbH_UDP-GlcNAc_AT"/>
    <property type="match status" value="1"/>
</dbReference>
<dbReference type="FunFam" id="1.20.1180.10:FF:000001">
    <property type="entry name" value="Acyl-[acyl-carrier-protein]--UDP-N-acetylglucosamine O-acyltransferase"/>
    <property type="match status" value="1"/>
</dbReference>
<dbReference type="FunFam" id="2.160.10.10:FF:000003">
    <property type="entry name" value="Acyl-[acyl-carrier-protein]--UDP-N-acetylglucosamine O-acyltransferase"/>
    <property type="match status" value="1"/>
</dbReference>
<dbReference type="Gene3D" id="2.160.10.10">
    <property type="entry name" value="Hexapeptide repeat proteins"/>
    <property type="match status" value="1"/>
</dbReference>
<dbReference type="Gene3D" id="1.20.1180.10">
    <property type="entry name" value="Udp N-acetylglucosamine O-acyltransferase, C-terminal domain"/>
    <property type="match status" value="1"/>
</dbReference>
<dbReference type="HAMAP" id="MF_00387">
    <property type="entry name" value="LpxA"/>
    <property type="match status" value="1"/>
</dbReference>
<dbReference type="InterPro" id="IPR029098">
    <property type="entry name" value="Acetyltransf_C"/>
</dbReference>
<dbReference type="InterPro" id="IPR037157">
    <property type="entry name" value="Acetyltransf_C_sf"/>
</dbReference>
<dbReference type="InterPro" id="IPR001451">
    <property type="entry name" value="Hexapep"/>
</dbReference>
<dbReference type="InterPro" id="IPR018357">
    <property type="entry name" value="Hexapep_transf_CS"/>
</dbReference>
<dbReference type="InterPro" id="IPR010137">
    <property type="entry name" value="Lipid_A_LpxA"/>
</dbReference>
<dbReference type="InterPro" id="IPR011004">
    <property type="entry name" value="Trimer_LpxA-like_sf"/>
</dbReference>
<dbReference type="NCBIfam" id="TIGR01852">
    <property type="entry name" value="lipid_A_lpxA"/>
    <property type="match status" value="1"/>
</dbReference>
<dbReference type="NCBIfam" id="NF003657">
    <property type="entry name" value="PRK05289.1"/>
    <property type="match status" value="1"/>
</dbReference>
<dbReference type="PANTHER" id="PTHR43480">
    <property type="entry name" value="ACYL-[ACYL-CARRIER-PROTEIN]--UDP-N-ACETYLGLUCOSAMINE O-ACYLTRANSFERASE"/>
    <property type="match status" value="1"/>
</dbReference>
<dbReference type="PANTHER" id="PTHR43480:SF1">
    <property type="entry name" value="ACYL-[ACYL-CARRIER-PROTEIN]--UDP-N-ACETYLGLUCOSAMINE O-ACYLTRANSFERASE, MITOCHONDRIAL-RELATED"/>
    <property type="match status" value="1"/>
</dbReference>
<dbReference type="Pfam" id="PF13720">
    <property type="entry name" value="Acetyltransf_11"/>
    <property type="match status" value="1"/>
</dbReference>
<dbReference type="Pfam" id="PF00132">
    <property type="entry name" value="Hexapep"/>
    <property type="match status" value="2"/>
</dbReference>
<dbReference type="PIRSF" id="PIRSF000456">
    <property type="entry name" value="UDP-GlcNAc_acltr"/>
    <property type="match status" value="1"/>
</dbReference>
<dbReference type="SUPFAM" id="SSF51161">
    <property type="entry name" value="Trimeric LpxA-like enzymes"/>
    <property type="match status" value="1"/>
</dbReference>
<dbReference type="PROSITE" id="PS00101">
    <property type="entry name" value="HEXAPEP_TRANSFERASES"/>
    <property type="match status" value="2"/>
</dbReference>
<gene>
    <name evidence="1" type="primary">lpxA</name>
    <name type="ordered locus">ECIAI39_0184</name>
</gene>
<reference key="1">
    <citation type="journal article" date="2009" name="PLoS Genet.">
        <title>Organised genome dynamics in the Escherichia coli species results in highly diverse adaptive paths.</title>
        <authorList>
            <person name="Touchon M."/>
            <person name="Hoede C."/>
            <person name="Tenaillon O."/>
            <person name="Barbe V."/>
            <person name="Baeriswyl S."/>
            <person name="Bidet P."/>
            <person name="Bingen E."/>
            <person name="Bonacorsi S."/>
            <person name="Bouchier C."/>
            <person name="Bouvet O."/>
            <person name="Calteau A."/>
            <person name="Chiapello H."/>
            <person name="Clermont O."/>
            <person name="Cruveiller S."/>
            <person name="Danchin A."/>
            <person name="Diard M."/>
            <person name="Dossat C."/>
            <person name="Karoui M.E."/>
            <person name="Frapy E."/>
            <person name="Garry L."/>
            <person name="Ghigo J.M."/>
            <person name="Gilles A.M."/>
            <person name="Johnson J."/>
            <person name="Le Bouguenec C."/>
            <person name="Lescat M."/>
            <person name="Mangenot S."/>
            <person name="Martinez-Jehanne V."/>
            <person name="Matic I."/>
            <person name="Nassif X."/>
            <person name="Oztas S."/>
            <person name="Petit M.A."/>
            <person name="Pichon C."/>
            <person name="Rouy Z."/>
            <person name="Ruf C.S."/>
            <person name="Schneider D."/>
            <person name="Tourret J."/>
            <person name="Vacherie B."/>
            <person name="Vallenet D."/>
            <person name="Medigue C."/>
            <person name="Rocha E.P.C."/>
            <person name="Denamur E."/>
        </authorList>
    </citation>
    <scope>NUCLEOTIDE SEQUENCE [LARGE SCALE GENOMIC DNA]</scope>
    <source>
        <strain>IAI39 / ExPEC</strain>
    </source>
</reference>
<comment type="function">
    <text evidence="1">Involved in the biosynthesis of lipid A, a phosphorylated glycolipid that anchors the lipopolysaccharide to the outer membrane of the cell.</text>
</comment>
<comment type="catalytic activity">
    <reaction evidence="1">
        <text>a (3R)-hydroxyacyl-[ACP] + UDP-N-acetyl-alpha-D-glucosamine = a UDP-3-O-[(3R)-3-hydroxyacyl]-N-acetyl-alpha-D-glucosamine + holo-[ACP]</text>
        <dbReference type="Rhea" id="RHEA:67812"/>
        <dbReference type="Rhea" id="RHEA-COMP:9685"/>
        <dbReference type="Rhea" id="RHEA-COMP:9945"/>
        <dbReference type="ChEBI" id="CHEBI:57705"/>
        <dbReference type="ChEBI" id="CHEBI:64479"/>
        <dbReference type="ChEBI" id="CHEBI:78827"/>
        <dbReference type="ChEBI" id="CHEBI:173225"/>
        <dbReference type="EC" id="2.3.1.129"/>
    </reaction>
</comment>
<comment type="pathway">
    <text evidence="1">Glycolipid biosynthesis; lipid IV(A) biosynthesis; lipid IV(A) from (3R)-3-hydroxytetradecanoyl-[acyl-carrier-protein] and UDP-N-acetyl-alpha-D-glucosamine: step 1/6.</text>
</comment>
<comment type="subunit">
    <text evidence="1">Homotrimer.</text>
</comment>
<comment type="subcellular location">
    <subcellularLocation>
        <location evidence="1">Cytoplasm</location>
    </subcellularLocation>
</comment>
<comment type="similarity">
    <text evidence="1">Belongs to the transferase hexapeptide repeat family. LpxA subfamily.</text>
</comment>
<keyword id="KW-0012">Acyltransferase</keyword>
<keyword id="KW-0963">Cytoplasm</keyword>
<keyword id="KW-0441">Lipid A biosynthesis</keyword>
<keyword id="KW-0444">Lipid biosynthesis</keyword>
<keyword id="KW-0443">Lipid metabolism</keyword>
<keyword id="KW-0677">Repeat</keyword>
<keyword id="KW-0808">Transferase</keyword>
<proteinExistence type="inferred from homology"/>
<accession>B7NIE3</accession>
<organism>
    <name type="scientific">Escherichia coli O7:K1 (strain IAI39 / ExPEC)</name>
    <dbReference type="NCBI Taxonomy" id="585057"/>
    <lineage>
        <taxon>Bacteria</taxon>
        <taxon>Pseudomonadati</taxon>
        <taxon>Pseudomonadota</taxon>
        <taxon>Gammaproteobacteria</taxon>
        <taxon>Enterobacterales</taxon>
        <taxon>Enterobacteriaceae</taxon>
        <taxon>Escherichia</taxon>
    </lineage>
</organism>
<protein>
    <recommendedName>
        <fullName evidence="1">Acyl-[acyl-carrier-protein]--UDP-N-acetylglucosamine O-acyltransferase</fullName>
        <shortName evidence="1">UDP-N-acetylglucosamine acyltransferase</shortName>
        <ecNumber evidence="1">2.3.1.129</ecNumber>
    </recommendedName>
</protein>
<evidence type="ECO:0000255" key="1">
    <source>
        <dbReference type="HAMAP-Rule" id="MF_00387"/>
    </source>
</evidence>